<gene>
    <name type="primary">mael</name>
    <name type="ORF">GD15049</name>
</gene>
<evidence type="ECO:0000250" key="1"/>
<evidence type="ECO:0000256" key="2">
    <source>
        <dbReference type="SAM" id="MobiDB-lite"/>
    </source>
</evidence>
<evidence type="ECO:0000305" key="3"/>
<organism>
    <name type="scientific">Drosophila simulans</name>
    <name type="common">Fruit fly</name>
    <dbReference type="NCBI Taxonomy" id="7240"/>
    <lineage>
        <taxon>Eukaryota</taxon>
        <taxon>Metazoa</taxon>
        <taxon>Ecdysozoa</taxon>
        <taxon>Arthropoda</taxon>
        <taxon>Hexapoda</taxon>
        <taxon>Insecta</taxon>
        <taxon>Pterygota</taxon>
        <taxon>Neoptera</taxon>
        <taxon>Endopterygota</taxon>
        <taxon>Diptera</taxon>
        <taxon>Brachycera</taxon>
        <taxon>Muscomorpha</taxon>
        <taxon>Ephydroidea</taxon>
        <taxon>Drosophilidae</taxon>
        <taxon>Drosophila</taxon>
        <taxon>Sophophora</taxon>
    </lineage>
</organism>
<proteinExistence type="inferred from homology"/>
<name>MAEL_DROSI</name>
<sequence length="394" mass="44393">MAPKKQNGFMMFVNEWRNRNAEGRRMTLAEAVYHCGTIWEKMDTQQRGPYNSDAKDANAARRDKRGSLNGHGQVDKAQREAAESLMDKAQREAAESLMDMKRTTERLVLNAKMSHDLENAKFVFVAFNYFTKALTTDVYVPAEFAACEYSLKEGIRSIYSTMIDPGQIIFGQGSDALHNSSTTHDLPLPPNALGEKNMVKLYRNILDYLTKCQGEGKTPIVFTPAENIGMVKSCFRYLECEDDSRDGGGKIEVFDIQYLLFILKKEVMSVAGLNDEKINKFATDAFFKNDFFEFTAGIACQISSINTRDYHVATLIGLLPAQTINVYLGSTLRSMHEVLSDNDTKLTGYISFLFEVICGVALMFWVLQKARKELSETLLSADYNNEGKHPDVQV</sequence>
<comment type="function">
    <text evidence="1">Involved both in the piRNA and miRNA metabolic processes. As a component of the meiotic nuage, plays a central role during oogenesis by repressing transposable elements and preventing their mobilization, which is essential for the germline integrity. Repression of transposable elements is mediated via the piRNA metabolic process, which mediates the repression of transposable elements during meiosis by forming complexes composed of piRNAs and Piwi proteins and governs the repression of transposons. As a nuclear component, it is required for proper differentiation in the germline stem cell (GSC) lineage by repressing microRNA-7 (miR-7), thereby acting as an indirect regulator of bag-of-marbles (Bam). Acts by binding to the promoter of miR-7 gene and repressing its expression; miR-7 repression alleviates the Bam repression by miR-7, thereby allowing differentiation in the germline stem cell (GSC) lineage (By similarity).</text>
</comment>
<comment type="subcellular location">
    <subcellularLocation>
        <location>Cytoplasm</location>
    </subcellularLocation>
    <subcellularLocation>
        <location>Nucleus</location>
    </subcellularLocation>
    <text evidence="1">Component of the meiotic nuage, also named P granule, a germ-cell-specific organelle required to repress transposon activity during meiosis.</text>
</comment>
<comment type="similarity">
    <text evidence="3">Belongs to the maelstrom family.</text>
</comment>
<accession>B4QL99</accession>
<keyword id="KW-0963">Cytoplasm</keyword>
<keyword id="KW-0217">Developmental protein</keyword>
<keyword id="KW-0221">Differentiation</keyword>
<keyword id="KW-0238">DNA-binding</keyword>
<keyword id="KW-0469">Meiosis</keyword>
<keyword id="KW-0539">Nucleus</keyword>
<keyword id="KW-0896">Oogenesis</keyword>
<keyword id="KW-1185">Reference proteome</keyword>
<keyword id="KW-0678">Repressor</keyword>
<keyword id="KW-0943">RNA-mediated gene silencing</keyword>
<keyword id="KW-0804">Transcription</keyword>
<keyword id="KW-0805">Transcription regulation</keyword>
<protein>
    <recommendedName>
        <fullName>Protein maelstrom</fullName>
    </recommendedName>
</protein>
<feature type="chain" id="PRO_0000367307" description="Protein maelstrom">
    <location>
        <begin position="1"/>
        <end position="394"/>
    </location>
</feature>
<feature type="DNA-binding region" description="HMG box">
    <location>
        <begin position="2"/>
        <end position="69"/>
    </location>
</feature>
<feature type="region of interest" description="Disordered" evidence="2">
    <location>
        <begin position="44"/>
        <end position="93"/>
    </location>
</feature>
<feature type="compositionally biased region" description="Basic and acidic residues" evidence="2">
    <location>
        <begin position="73"/>
        <end position="93"/>
    </location>
</feature>
<reference key="1">
    <citation type="journal article" date="2007" name="Nature">
        <title>Evolution of genes and genomes on the Drosophila phylogeny.</title>
        <authorList>
            <consortium name="Drosophila 12 genomes consortium"/>
        </authorList>
    </citation>
    <scope>NUCLEOTIDE SEQUENCE [LARGE SCALE GENOMIC DNA]</scope>
</reference>
<dbReference type="EMBL" id="CM000363">
    <property type="protein sequence ID" value="EDX11517.1"/>
    <property type="molecule type" value="Genomic_DNA"/>
</dbReference>
<dbReference type="SMR" id="B4QL99"/>
<dbReference type="STRING" id="7240.B4QL99"/>
<dbReference type="HOGENOM" id="CLU_044134_1_0_1"/>
<dbReference type="OMA" id="PAENIGM"/>
<dbReference type="OrthoDB" id="24555at2759"/>
<dbReference type="PhylomeDB" id="B4QL99"/>
<dbReference type="Proteomes" id="UP000000304">
    <property type="component" value="Chromosome 3L"/>
</dbReference>
<dbReference type="GO" id="GO:0005737">
    <property type="term" value="C:cytoplasm"/>
    <property type="evidence" value="ECO:0000250"/>
    <property type="project" value="UniProtKB"/>
</dbReference>
<dbReference type="GO" id="GO:0005634">
    <property type="term" value="C:nucleus"/>
    <property type="evidence" value="ECO:0000250"/>
    <property type="project" value="UniProtKB"/>
</dbReference>
<dbReference type="GO" id="GO:0043186">
    <property type="term" value="C:P granule"/>
    <property type="evidence" value="ECO:0000250"/>
    <property type="project" value="UniProtKB"/>
</dbReference>
<dbReference type="GO" id="GO:0048471">
    <property type="term" value="C:perinuclear region of cytoplasm"/>
    <property type="evidence" value="ECO:0000250"/>
    <property type="project" value="UniProtKB"/>
</dbReference>
<dbReference type="GO" id="GO:0000976">
    <property type="term" value="F:transcription cis-regulatory region binding"/>
    <property type="evidence" value="ECO:0000250"/>
    <property type="project" value="UniProtKB"/>
</dbReference>
<dbReference type="GO" id="GO:0030718">
    <property type="term" value="P:germ-line stem cell population maintenance"/>
    <property type="evidence" value="ECO:0000250"/>
    <property type="project" value="UniProtKB"/>
</dbReference>
<dbReference type="GO" id="GO:0007140">
    <property type="term" value="P:male meiotic nuclear division"/>
    <property type="evidence" value="ECO:0007669"/>
    <property type="project" value="TreeGrafter"/>
</dbReference>
<dbReference type="GO" id="GO:0045892">
    <property type="term" value="P:negative regulation of DNA-templated transcription"/>
    <property type="evidence" value="ECO:0000250"/>
    <property type="project" value="UniProtKB"/>
</dbReference>
<dbReference type="GO" id="GO:0048477">
    <property type="term" value="P:oogenesis"/>
    <property type="evidence" value="ECO:0007669"/>
    <property type="project" value="UniProtKB-KW"/>
</dbReference>
<dbReference type="GO" id="GO:0034587">
    <property type="term" value="P:piRNA processing"/>
    <property type="evidence" value="ECO:0000250"/>
    <property type="project" value="UniProtKB"/>
</dbReference>
<dbReference type="GO" id="GO:0060964">
    <property type="term" value="P:regulation of miRNA-mediated gene silencing"/>
    <property type="evidence" value="ECO:0007669"/>
    <property type="project" value="InterPro"/>
</dbReference>
<dbReference type="GO" id="GO:0031047">
    <property type="term" value="P:regulatory ncRNA-mediated gene silencing"/>
    <property type="evidence" value="ECO:0000250"/>
    <property type="project" value="UniProtKB"/>
</dbReference>
<dbReference type="GO" id="GO:0007283">
    <property type="term" value="P:spermatogenesis"/>
    <property type="evidence" value="ECO:0000250"/>
    <property type="project" value="UniProtKB"/>
</dbReference>
<dbReference type="FunFam" id="1.10.30.10:FF:000057">
    <property type="entry name" value="Protein maelstrom 2"/>
    <property type="match status" value="1"/>
</dbReference>
<dbReference type="Gene3D" id="1.10.30.10">
    <property type="entry name" value="High mobility group box domain"/>
    <property type="match status" value="1"/>
</dbReference>
<dbReference type="InterPro" id="IPR036910">
    <property type="entry name" value="HMG_box_dom_sf"/>
</dbReference>
<dbReference type="InterPro" id="IPR024970">
    <property type="entry name" value="Maelstrom"/>
</dbReference>
<dbReference type="InterPro" id="IPR039259">
    <property type="entry name" value="Protein_maelstrom"/>
</dbReference>
<dbReference type="PANTHER" id="PTHR21358">
    <property type="entry name" value="PROTEIN MAELSTROM HOMOLOG"/>
    <property type="match status" value="1"/>
</dbReference>
<dbReference type="PANTHER" id="PTHR21358:SF4">
    <property type="entry name" value="PROTEIN MAELSTROM HOMOLOG"/>
    <property type="match status" value="1"/>
</dbReference>
<dbReference type="Pfam" id="PF13017">
    <property type="entry name" value="Maelstrom"/>
    <property type="match status" value="1"/>
</dbReference>
<dbReference type="SUPFAM" id="SSF47095">
    <property type="entry name" value="HMG-box"/>
    <property type="match status" value="1"/>
</dbReference>